<sequence>MLLPTQTSWVILAGGQASRMGGKDKGLVELNGSPLIQYVINKLSQQDVSITINANRNLDSYQAFAPVVSDSFPDYPGPLGGIHAGLKNASTDWVGFVPCDSPQISDDLVERFCAAVKEDSDILVAHDGEFKQPVFTLFHKRVLPKLEAFLERGDRKIILLYKECVTEYVDFSDAPNCFVNLNTPEELTQFGTLQ</sequence>
<feature type="chain" id="PRO_1000132965" description="Molybdenum cofactor guanylyltransferase">
    <location>
        <begin position="1"/>
        <end position="194"/>
    </location>
</feature>
<feature type="binding site" evidence="1">
    <location>
        <begin position="12"/>
        <end position="14"/>
    </location>
    <ligand>
        <name>GTP</name>
        <dbReference type="ChEBI" id="CHEBI:37565"/>
    </ligand>
</feature>
<feature type="binding site" evidence="1">
    <location>
        <position position="25"/>
    </location>
    <ligand>
        <name>GTP</name>
        <dbReference type="ChEBI" id="CHEBI:37565"/>
    </ligand>
</feature>
<feature type="binding site" evidence="1">
    <location>
        <position position="53"/>
    </location>
    <ligand>
        <name>GTP</name>
        <dbReference type="ChEBI" id="CHEBI:37565"/>
    </ligand>
</feature>
<feature type="binding site" evidence="1">
    <location>
        <position position="70"/>
    </location>
    <ligand>
        <name>GTP</name>
        <dbReference type="ChEBI" id="CHEBI:37565"/>
    </ligand>
</feature>
<feature type="binding site" evidence="1">
    <location>
        <position position="100"/>
    </location>
    <ligand>
        <name>GTP</name>
        <dbReference type="ChEBI" id="CHEBI:37565"/>
    </ligand>
</feature>
<feature type="binding site" evidence="1">
    <location>
        <position position="100"/>
    </location>
    <ligand>
        <name>Mg(2+)</name>
        <dbReference type="ChEBI" id="CHEBI:18420"/>
    </ligand>
</feature>
<protein>
    <recommendedName>
        <fullName evidence="1">Molybdenum cofactor guanylyltransferase</fullName>
        <shortName evidence="1">MoCo guanylyltransferase</shortName>
        <ecNumber evidence="1">2.7.7.77</ecNumber>
    </recommendedName>
    <alternativeName>
        <fullName evidence="1">GTP:molybdopterin guanylyltransferase</fullName>
    </alternativeName>
    <alternativeName>
        <fullName evidence="1">Mo-MPT guanylyltransferase</fullName>
    </alternativeName>
    <alternativeName>
        <fullName evidence="1">Molybdopterin guanylyltransferase</fullName>
    </alternativeName>
    <alternativeName>
        <fullName evidence="1">Molybdopterin-guanine dinucleotide synthase</fullName>
        <shortName evidence="1">MGD synthase</shortName>
    </alternativeName>
</protein>
<organism>
    <name type="scientific">Vibrio atlanticus (strain LGP32)</name>
    <name type="common">Vibrio splendidus (strain Mel32)</name>
    <dbReference type="NCBI Taxonomy" id="575788"/>
    <lineage>
        <taxon>Bacteria</taxon>
        <taxon>Pseudomonadati</taxon>
        <taxon>Pseudomonadota</taxon>
        <taxon>Gammaproteobacteria</taxon>
        <taxon>Vibrionales</taxon>
        <taxon>Vibrionaceae</taxon>
        <taxon>Vibrio</taxon>
    </lineage>
</organism>
<dbReference type="EC" id="2.7.7.77" evidence="1"/>
<dbReference type="EMBL" id="FM954972">
    <property type="protein sequence ID" value="CAV18671.1"/>
    <property type="molecule type" value="Genomic_DNA"/>
</dbReference>
<dbReference type="SMR" id="B7VNT9"/>
<dbReference type="STRING" id="575788.VS_1502"/>
<dbReference type="KEGG" id="vsp:VS_1502"/>
<dbReference type="PATRIC" id="fig|575788.5.peg.2799"/>
<dbReference type="eggNOG" id="COG0746">
    <property type="taxonomic scope" value="Bacteria"/>
</dbReference>
<dbReference type="HOGENOM" id="CLU_055597_5_1_6"/>
<dbReference type="Proteomes" id="UP000009100">
    <property type="component" value="Chromosome 1"/>
</dbReference>
<dbReference type="GO" id="GO:0005737">
    <property type="term" value="C:cytoplasm"/>
    <property type="evidence" value="ECO:0007669"/>
    <property type="project" value="UniProtKB-SubCell"/>
</dbReference>
<dbReference type="GO" id="GO:0005525">
    <property type="term" value="F:GTP binding"/>
    <property type="evidence" value="ECO:0007669"/>
    <property type="project" value="UniProtKB-UniRule"/>
</dbReference>
<dbReference type="GO" id="GO:0046872">
    <property type="term" value="F:metal ion binding"/>
    <property type="evidence" value="ECO:0007669"/>
    <property type="project" value="UniProtKB-KW"/>
</dbReference>
<dbReference type="GO" id="GO:0061603">
    <property type="term" value="F:molybdenum cofactor guanylyltransferase activity"/>
    <property type="evidence" value="ECO:0007669"/>
    <property type="project" value="UniProtKB-EC"/>
</dbReference>
<dbReference type="GO" id="GO:1902758">
    <property type="term" value="P:bis(molybdopterin guanine dinucleotide)molybdenum biosynthetic process"/>
    <property type="evidence" value="ECO:0007669"/>
    <property type="project" value="TreeGrafter"/>
</dbReference>
<dbReference type="CDD" id="cd02503">
    <property type="entry name" value="MobA"/>
    <property type="match status" value="1"/>
</dbReference>
<dbReference type="Gene3D" id="3.90.550.10">
    <property type="entry name" value="Spore Coat Polysaccharide Biosynthesis Protein SpsA, Chain A"/>
    <property type="match status" value="1"/>
</dbReference>
<dbReference type="HAMAP" id="MF_00316">
    <property type="entry name" value="MobA"/>
    <property type="match status" value="1"/>
</dbReference>
<dbReference type="InterPro" id="IPR025877">
    <property type="entry name" value="MobA-like_NTP_Trfase"/>
</dbReference>
<dbReference type="InterPro" id="IPR013482">
    <property type="entry name" value="Molybde_CF_guanTrfase"/>
</dbReference>
<dbReference type="InterPro" id="IPR029044">
    <property type="entry name" value="Nucleotide-diphossugar_trans"/>
</dbReference>
<dbReference type="NCBIfam" id="TIGR02665">
    <property type="entry name" value="molyb_mobA"/>
    <property type="match status" value="1"/>
</dbReference>
<dbReference type="PANTHER" id="PTHR19136">
    <property type="entry name" value="MOLYBDENUM COFACTOR GUANYLYLTRANSFERASE"/>
    <property type="match status" value="1"/>
</dbReference>
<dbReference type="PANTHER" id="PTHR19136:SF81">
    <property type="entry name" value="MOLYBDENUM COFACTOR GUANYLYLTRANSFERASE"/>
    <property type="match status" value="1"/>
</dbReference>
<dbReference type="Pfam" id="PF12804">
    <property type="entry name" value="NTP_transf_3"/>
    <property type="match status" value="1"/>
</dbReference>
<dbReference type="SUPFAM" id="SSF53448">
    <property type="entry name" value="Nucleotide-diphospho-sugar transferases"/>
    <property type="match status" value="1"/>
</dbReference>
<gene>
    <name evidence="1" type="primary">mobA</name>
    <name type="ordered locus">VS_1502</name>
</gene>
<comment type="function">
    <text evidence="1">Transfers a GMP moiety from GTP to Mo-molybdopterin (Mo-MPT) cofactor (Moco or molybdenum cofactor) to form Mo-molybdopterin guanine dinucleotide (Mo-MGD) cofactor.</text>
</comment>
<comment type="catalytic activity">
    <reaction evidence="1">
        <text>Mo-molybdopterin + GTP + H(+) = Mo-molybdopterin guanine dinucleotide + diphosphate</text>
        <dbReference type="Rhea" id="RHEA:34243"/>
        <dbReference type="ChEBI" id="CHEBI:15378"/>
        <dbReference type="ChEBI" id="CHEBI:33019"/>
        <dbReference type="ChEBI" id="CHEBI:37565"/>
        <dbReference type="ChEBI" id="CHEBI:71302"/>
        <dbReference type="ChEBI" id="CHEBI:71310"/>
        <dbReference type="EC" id="2.7.7.77"/>
    </reaction>
</comment>
<comment type="cofactor">
    <cofactor evidence="1">
        <name>Mg(2+)</name>
        <dbReference type="ChEBI" id="CHEBI:18420"/>
    </cofactor>
</comment>
<comment type="subunit">
    <text evidence="1">Monomer.</text>
</comment>
<comment type="subcellular location">
    <subcellularLocation>
        <location evidence="1">Cytoplasm</location>
    </subcellularLocation>
</comment>
<comment type="domain">
    <text evidence="1">The N-terminal domain determines nucleotide recognition and specific binding, while the C-terminal domain determines the specific binding to the target protein.</text>
</comment>
<comment type="similarity">
    <text evidence="1">Belongs to the MobA family.</text>
</comment>
<name>MOBA_VIBA3</name>
<reference key="1">
    <citation type="submission" date="2009-02" db="EMBL/GenBank/DDBJ databases">
        <title>Vibrio splendidus str. LGP32 complete genome.</title>
        <authorList>
            <person name="Mazel D."/>
            <person name="Le Roux F."/>
        </authorList>
    </citation>
    <scope>NUCLEOTIDE SEQUENCE [LARGE SCALE GENOMIC DNA]</scope>
    <source>
        <strain>LGP32</strain>
    </source>
</reference>
<evidence type="ECO:0000255" key="1">
    <source>
        <dbReference type="HAMAP-Rule" id="MF_00316"/>
    </source>
</evidence>
<keyword id="KW-0963">Cytoplasm</keyword>
<keyword id="KW-0342">GTP-binding</keyword>
<keyword id="KW-0460">Magnesium</keyword>
<keyword id="KW-0479">Metal-binding</keyword>
<keyword id="KW-0501">Molybdenum cofactor biosynthesis</keyword>
<keyword id="KW-0547">Nucleotide-binding</keyword>
<keyword id="KW-0808">Transferase</keyword>
<proteinExistence type="inferred from homology"/>
<accession>B7VNT9</accession>